<organism>
    <name type="scientific">Bacillus pumilus (strain SAFR-032)</name>
    <dbReference type="NCBI Taxonomy" id="315750"/>
    <lineage>
        <taxon>Bacteria</taxon>
        <taxon>Bacillati</taxon>
        <taxon>Bacillota</taxon>
        <taxon>Bacilli</taxon>
        <taxon>Bacillales</taxon>
        <taxon>Bacillaceae</taxon>
        <taxon>Bacillus</taxon>
    </lineage>
</organism>
<keyword id="KW-0961">Cell wall biogenesis/degradation</keyword>
<keyword id="KW-0963">Cytoplasm</keyword>
<keyword id="KW-0596">Phosphopantetheine</keyword>
<keyword id="KW-0597">Phosphoprotein</keyword>
<accession>A8FFX3</accession>
<proteinExistence type="inferred from homology"/>
<gene>
    <name evidence="1" type="primary">dltC</name>
    <name type="ordered locus">BPUM_2477</name>
</gene>
<comment type="function">
    <text evidence="1">Carrier protein involved in the D-alanylation of lipoteichoic acid (LTA). The loading of thioester-linked D-alanine onto DltC is catalyzed by D-alanine--D-alanyl carrier protein ligase DltA. The DltC-carried D-alanyl group is further transferred to cell membrane phosphatidylglycerol (PG) by forming an ester bond, probably catalyzed by DltD. D-alanylation of LTA plays an important role in modulating the properties of the cell wall in Gram-positive bacteria, influencing the net charge of the cell wall.</text>
</comment>
<comment type="pathway">
    <text evidence="1">Cell wall biogenesis; lipoteichoic acid biosynthesis.</text>
</comment>
<comment type="subcellular location">
    <subcellularLocation>
        <location evidence="1">Cytoplasm</location>
    </subcellularLocation>
</comment>
<comment type="PTM">
    <text evidence="1">4'-phosphopantetheine is transferred from CoA to a specific serine of apo-DCP.</text>
</comment>
<comment type="similarity">
    <text evidence="1">Belongs to the DltC family.</text>
</comment>
<evidence type="ECO:0000255" key="1">
    <source>
        <dbReference type="HAMAP-Rule" id="MF_00565"/>
    </source>
</evidence>
<sequence>MEFKNQVYGIIAEVCQDDVVKENPEIAIFDEGLLDSFGTVELLMAIESQLGITVPITEFDRDVWDTPNHIAEQLAEMK</sequence>
<dbReference type="EMBL" id="CP000813">
    <property type="protein sequence ID" value="ABV63140.1"/>
    <property type="molecule type" value="Genomic_DNA"/>
</dbReference>
<dbReference type="RefSeq" id="WP_003216498.1">
    <property type="nucleotide sequence ID" value="NZ_VEIS01000010.1"/>
</dbReference>
<dbReference type="SMR" id="A8FFX3"/>
<dbReference type="STRING" id="315750.BPUM_2477"/>
<dbReference type="GeneID" id="66364052"/>
<dbReference type="KEGG" id="bpu:BPUM_2477"/>
<dbReference type="eggNOG" id="COG0236">
    <property type="taxonomic scope" value="Bacteria"/>
</dbReference>
<dbReference type="HOGENOM" id="CLU_108696_19_0_9"/>
<dbReference type="OrthoDB" id="6462171at2"/>
<dbReference type="UniPathway" id="UPA00556"/>
<dbReference type="Proteomes" id="UP000001355">
    <property type="component" value="Chromosome"/>
</dbReference>
<dbReference type="GO" id="GO:0005737">
    <property type="term" value="C:cytoplasm"/>
    <property type="evidence" value="ECO:0007669"/>
    <property type="project" value="UniProtKB-SubCell"/>
</dbReference>
<dbReference type="GO" id="GO:0036370">
    <property type="term" value="F:D-alanyl carrier activity"/>
    <property type="evidence" value="ECO:0007669"/>
    <property type="project" value="UniProtKB-UniRule"/>
</dbReference>
<dbReference type="GO" id="GO:0071555">
    <property type="term" value="P:cell wall organization"/>
    <property type="evidence" value="ECO:0007669"/>
    <property type="project" value="UniProtKB-KW"/>
</dbReference>
<dbReference type="GO" id="GO:0070395">
    <property type="term" value="P:lipoteichoic acid biosynthetic process"/>
    <property type="evidence" value="ECO:0007669"/>
    <property type="project" value="UniProtKB-UniRule"/>
</dbReference>
<dbReference type="Gene3D" id="1.10.1200.10">
    <property type="entry name" value="ACP-like"/>
    <property type="match status" value="1"/>
</dbReference>
<dbReference type="HAMAP" id="MF_00565">
    <property type="entry name" value="DltC"/>
    <property type="match status" value="1"/>
</dbReference>
<dbReference type="InterPro" id="IPR036736">
    <property type="entry name" value="ACP-like_sf"/>
</dbReference>
<dbReference type="InterPro" id="IPR003230">
    <property type="entry name" value="DltC"/>
</dbReference>
<dbReference type="InterPro" id="IPR009081">
    <property type="entry name" value="PP-bd_ACP"/>
</dbReference>
<dbReference type="NCBIfam" id="TIGR01688">
    <property type="entry name" value="dltC"/>
    <property type="match status" value="1"/>
</dbReference>
<dbReference type="NCBIfam" id="NF003464">
    <property type="entry name" value="PRK05087.1"/>
    <property type="match status" value="1"/>
</dbReference>
<dbReference type="Pfam" id="PF00550">
    <property type="entry name" value="PP-binding"/>
    <property type="match status" value="1"/>
</dbReference>
<dbReference type="SUPFAM" id="SSF47336">
    <property type="entry name" value="ACP-like"/>
    <property type="match status" value="1"/>
</dbReference>
<dbReference type="PROSITE" id="PS50075">
    <property type="entry name" value="CARRIER"/>
    <property type="match status" value="1"/>
</dbReference>
<protein>
    <recommendedName>
        <fullName evidence="1">D-alanyl carrier protein</fullName>
        <shortName evidence="1">DCP</shortName>
    </recommendedName>
    <alternativeName>
        <fullName evidence="1">D-alanine--poly(phosphoribitol) ligase subunit 2</fullName>
    </alternativeName>
</protein>
<reference key="1">
    <citation type="journal article" date="2007" name="PLoS ONE">
        <title>Paradoxical DNA repair and peroxide resistance gene conservation in Bacillus pumilus SAFR-032.</title>
        <authorList>
            <person name="Gioia J."/>
            <person name="Yerrapragada S."/>
            <person name="Qin X."/>
            <person name="Jiang H."/>
            <person name="Igboeli O.C."/>
            <person name="Muzny D."/>
            <person name="Dugan-Rocha S."/>
            <person name="Ding Y."/>
            <person name="Hawes A."/>
            <person name="Liu W."/>
            <person name="Perez L."/>
            <person name="Kovar C."/>
            <person name="Dinh H."/>
            <person name="Lee S."/>
            <person name="Nazareth L."/>
            <person name="Blyth P."/>
            <person name="Holder M."/>
            <person name="Buhay C."/>
            <person name="Tirumalai M.R."/>
            <person name="Liu Y."/>
            <person name="Dasgupta I."/>
            <person name="Bokhetache L."/>
            <person name="Fujita M."/>
            <person name="Karouia F."/>
            <person name="Eswara Moorthy P."/>
            <person name="Siefert J."/>
            <person name="Uzman A."/>
            <person name="Buzumbo P."/>
            <person name="Verma A."/>
            <person name="Zwiya H."/>
            <person name="McWilliams B.D."/>
            <person name="Olowu A."/>
            <person name="Clinkenbeard K.D."/>
            <person name="Newcombe D."/>
            <person name="Golebiewski L."/>
            <person name="Petrosino J.F."/>
            <person name="Nicholson W.L."/>
            <person name="Fox G.E."/>
            <person name="Venkateswaran K."/>
            <person name="Highlander S.K."/>
            <person name="Weinstock G.M."/>
        </authorList>
    </citation>
    <scope>NUCLEOTIDE SEQUENCE [LARGE SCALE GENOMIC DNA]</scope>
    <source>
        <strain>SAFR-032</strain>
    </source>
</reference>
<feature type="chain" id="PRO_1000061140" description="D-alanyl carrier protein">
    <location>
        <begin position="1"/>
        <end position="78"/>
    </location>
</feature>
<feature type="domain" description="Carrier" evidence="1">
    <location>
        <begin position="1"/>
        <end position="78"/>
    </location>
</feature>
<feature type="modified residue" description="O-(pantetheine 4'-phosphoryl)serine" evidence="1">
    <location>
        <position position="36"/>
    </location>
</feature>
<name>DLTC_BACP2</name>